<keyword id="KW-0963">Cytoplasm</keyword>
<keyword id="KW-0226">DNA condensation</keyword>
<keyword id="KW-0238">DNA-binding</keyword>
<keyword id="KW-0408">Iron</keyword>
<keyword id="KW-0409">Iron storage</keyword>
<keyword id="KW-0479">Metal-binding</keyword>
<keyword id="KW-0560">Oxidoreductase</keyword>
<gene>
    <name evidence="1" type="primary">dps</name>
</gene>
<accession>Q84AP1</accession>
<reference key="1">
    <citation type="journal article" date="2004" name="Appl. Environ. Microbiol.">
        <title>Culture-independent analysis of fecal enterobacteria in environmental samples by single-cell mRNA profiling.</title>
        <authorList>
            <person name="Chen H."/>
            <person name="Ponniah G."/>
            <person name="Salonen N."/>
            <person name="Blum P."/>
        </authorList>
    </citation>
    <scope>NUCLEOTIDE SEQUENCE [GENOMIC DNA]</scope>
    <source>
        <strain>ATCC 33128</strain>
    </source>
</reference>
<sequence length="167" mass="18734">MRPAKLVKSKASALLYTRNDVSDSEKKATVELLNQQVIQFIDLSLITKQAHWNMRGANFIAVHEMLDGFRTALTDHLDTMAERAVQLGGVALGTTQVINSKTPLKSYPLDIHNVQDHLKELAERYAVVANSVRKAISEAKDEDTADIFTAASRDLDKFLWFIESTFE</sequence>
<comment type="function">
    <text evidence="1">During stationary phase, binds the chromosome non-specifically, forming a highly ordered and stable dps-DNA co-crystal within which chromosomal DNA is condensed and protected from diverse damages. It protects DNA from oxidative damage by sequestering intracellular Fe(2+) ion and storing it in the form of Fe(3+) oxyhydroxide mineral, which can be released after reduction. One hydrogen peroxide oxidizes two Fe(2+) ions, which prevents hydroxyl radical production by the Fenton reaction.</text>
</comment>
<comment type="catalytic activity">
    <reaction evidence="1">
        <text>2 Fe(2+) + H2O2 + 2 H(+) = 2 Fe(3+) + 2 H2O</text>
        <dbReference type="Rhea" id="RHEA:48712"/>
        <dbReference type="ChEBI" id="CHEBI:15377"/>
        <dbReference type="ChEBI" id="CHEBI:15378"/>
        <dbReference type="ChEBI" id="CHEBI:16240"/>
        <dbReference type="ChEBI" id="CHEBI:29033"/>
        <dbReference type="ChEBI" id="CHEBI:29034"/>
    </reaction>
</comment>
<comment type="subunit">
    <text evidence="1">Homododecamer. The 12 subunits form a hollow sphere into which the mineral iron core of up to 500 Fe(3+) can be deposited.</text>
</comment>
<comment type="subcellular location">
    <subcellularLocation>
        <location evidence="1">Cytoplasm</location>
    </subcellularLocation>
</comment>
<comment type="similarity">
    <text evidence="1">Belongs to the Dps family.</text>
</comment>
<organism>
    <name type="scientific">Citrobacter freundii</name>
    <dbReference type="NCBI Taxonomy" id="546"/>
    <lineage>
        <taxon>Bacteria</taxon>
        <taxon>Pseudomonadati</taxon>
        <taxon>Pseudomonadota</taxon>
        <taxon>Gammaproteobacteria</taxon>
        <taxon>Enterobacterales</taxon>
        <taxon>Enterobacteriaceae</taxon>
        <taxon>Citrobacter</taxon>
        <taxon>Citrobacter freundii complex</taxon>
    </lineage>
</organism>
<feature type="chain" id="PRO_0000271581" description="DNA protection during starvation protein">
    <location>
        <begin position="1"/>
        <end position="167"/>
    </location>
</feature>
<feature type="binding site" evidence="1">
    <location>
        <position position="51"/>
    </location>
    <ligand>
        <name>Fe cation</name>
        <dbReference type="ChEBI" id="CHEBI:24875"/>
    </ligand>
</feature>
<feature type="binding site" evidence="1">
    <location>
        <position position="78"/>
    </location>
    <ligand>
        <name>Fe cation</name>
        <dbReference type="ChEBI" id="CHEBI:24875"/>
    </ligand>
</feature>
<feature type="binding site" evidence="1">
    <location>
        <position position="82"/>
    </location>
    <ligand>
        <name>Fe cation</name>
        <dbReference type="ChEBI" id="CHEBI:24875"/>
    </ligand>
</feature>
<evidence type="ECO:0000255" key="1">
    <source>
        <dbReference type="HAMAP-Rule" id="MF_01441"/>
    </source>
</evidence>
<proteinExistence type="inferred from homology"/>
<dbReference type="EC" id="1.16.-.-" evidence="1"/>
<dbReference type="EMBL" id="AY191364">
    <property type="protein sequence ID" value="AAO47739.1"/>
    <property type="molecule type" value="Genomic_DNA"/>
</dbReference>
<dbReference type="SMR" id="Q84AP1"/>
<dbReference type="STRING" id="1333848.CFNIH1_14170"/>
<dbReference type="GO" id="GO:0005737">
    <property type="term" value="C:cytoplasm"/>
    <property type="evidence" value="ECO:0007669"/>
    <property type="project" value="UniProtKB-SubCell"/>
</dbReference>
<dbReference type="GO" id="GO:0003677">
    <property type="term" value="F:DNA binding"/>
    <property type="evidence" value="ECO:0007669"/>
    <property type="project" value="UniProtKB-UniRule"/>
</dbReference>
<dbReference type="GO" id="GO:0008199">
    <property type="term" value="F:ferric iron binding"/>
    <property type="evidence" value="ECO:0007669"/>
    <property type="project" value="UniProtKB-UniRule"/>
</dbReference>
<dbReference type="GO" id="GO:0016722">
    <property type="term" value="F:oxidoreductase activity, acting on metal ions"/>
    <property type="evidence" value="ECO:0007669"/>
    <property type="project" value="InterPro"/>
</dbReference>
<dbReference type="GO" id="GO:0030261">
    <property type="term" value="P:chromosome condensation"/>
    <property type="evidence" value="ECO:0007669"/>
    <property type="project" value="UniProtKB-KW"/>
</dbReference>
<dbReference type="GO" id="GO:0006879">
    <property type="term" value="P:intracellular iron ion homeostasis"/>
    <property type="evidence" value="ECO:0007669"/>
    <property type="project" value="UniProtKB-KW"/>
</dbReference>
<dbReference type="CDD" id="cd01043">
    <property type="entry name" value="DPS"/>
    <property type="match status" value="1"/>
</dbReference>
<dbReference type="FunFam" id="1.20.1260.10:FF:000003">
    <property type="entry name" value="DNA protection during starvation protein"/>
    <property type="match status" value="1"/>
</dbReference>
<dbReference type="Gene3D" id="1.20.1260.10">
    <property type="match status" value="1"/>
</dbReference>
<dbReference type="HAMAP" id="MF_01441">
    <property type="entry name" value="Dps"/>
    <property type="match status" value="1"/>
</dbReference>
<dbReference type="InterPro" id="IPR002177">
    <property type="entry name" value="DPS_DNA-bd"/>
</dbReference>
<dbReference type="InterPro" id="IPR023188">
    <property type="entry name" value="DPS_DNA-bd_CS"/>
</dbReference>
<dbReference type="InterPro" id="IPR023067">
    <property type="entry name" value="Dps_gammaproteobac"/>
</dbReference>
<dbReference type="InterPro" id="IPR012347">
    <property type="entry name" value="Ferritin-like"/>
</dbReference>
<dbReference type="InterPro" id="IPR009078">
    <property type="entry name" value="Ferritin-like_SF"/>
</dbReference>
<dbReference type="InterPro" id="IPR008331">
    <property type="entry name" value="Ferritin_DPS_dom"/>
</dbReference>
<dbReference type="NCBIfam" id="NF006975">
    <property type="entry name" value="PRK09448.1"/>
    <property type="match status" value="1"/>
</dbReference>
<dbReference type="PANTHER" id="PTHR42932:SF3">
    <property type="entry name" value="DNA PROTECTION DURING STARVATION PROTEIN"/>
    <property type="match status" value="1"/>
</dbReference>
<dbReference type="PANTHER" id="PTHR42932">
    <property type="entry name" value="GENERAL STRESS PROTEIN 20U"/>
    <property type="match status" value="1"/>
</dbReference>
<dbReference type="Pfam" id="PF00210">
    <property type="entry name" value="Ferritin"/>
    <property type="match status" value="1"/>
</dbReference>
<dbReference type="PIRSF" id="PIRSF005900">
    <property type="entry name" value="Dps"/>
    <property type="match status" value="1"/>
</dbReference>
<dbReference type="PRINTS" id="PR01346">
    <property type="entry name" value="HELNAPAPROT"/>
</dbReference>
<dbReference type="SUPFAM" id="SSF47240">
    <property type="entry name" value="Ferritin-like"/>
    <property type="match status" value="1"/>
</dbReference>
<dbReference type="PROSITE" id="PS00818">
    <property type="entry name" value="DPS_1"/>
    <property type="match status" value="1"/>
</dbReference>
<dbReference type="PROSITE" id="PS00819">
    <property type="entry name" value="DPS_2"/>
    <property type="match status" value="1"/>
</dbReference>
<protein>
    <recommendedName>
        <fullName evidence="1">DNA protection during starvation protein</fullName>
        <ecNumber evidence="1">1.16.-.-</ecNumber>
    </recommendedName>
</protein>
<name>DPS_CITFR</name>